<sequence>MSKNKLSKGQQRRVQANHQRRLRTDRKPELDDSQLGDAQEGIVISRFGQHADVEAVDGTQHRCNIRRTIKSLVTGDRVVWRPGLQAQEGVRVKGIVEAVHERTSVLTRPDLYDGVKPIAANIDQIVIVSAILPELSLNIIDRYLVACETLEVEPLIVLNKIDLLDADGRKFVDGMMDIYRRIGYDVLEVSSQTREGMEAFENALTGRISIFAGQSGVGKSSLLNALLPPTDNEILVNTVSGNSGLGQHTTTAARLYHFQHGGDVIDSPGVREFGLWHLAPEQITQGFVEFRDYLGHCKFRDCSHTNDPGCALREAVEQGKIAEERFDNYHRILESMEQAKPRKTSDSDEK</sequence>
<protein>
    <recommendedName>
        <fullName evidence="1">Small ribosomal subunit biogenesis GTPase RsgA</fullName>
        <ecNumber evidence="1">3.6.1.-</ecNumber>
    </recommendedName>
</protein>
<organism>
    <name type="scientific">Yersinia pestis bv. Antiqua (strain Antiqua)</name>
    <dbReference type="NCBI Taxonomy" id="360102"/>
    <lineage>
        <taxon>Bacteria</taxon>
        <taxon>Pseudomonadati</taxon>
        <taxon>Pseudomonadota</taxon>
        <taxon>Gammaproteobacteria</taxon>
        <taxon>Enterobacterales</taxon>
        <taxon>Yersiniaceae</taxon>
        <taxon>Yersinia</taxon>
    </lineage>
</organism>
<evidence type="ECO:0000255" key="1">
    <source>
        <dbReference type="HAMAP-Rule" id="MF_01820"/>
    </source>
</evidence>
<evidence type="ECO:0000255" key="2">
    <source>
        <dbReference type="PROSITE-ProRule" id="PRU01058"/>
    </source>
</evidence>
<evidence type="ECO:0000256" key="3">
    <source>
        <dbReference type="SAM" id="MobiDB-lite"/>
    </source>
</evidence>
<name>RSGA_YERPA</name>
<reference key="1">
    <citation type="journal article" date="2006" name="J. Bacteriol.">
        <title>Complete genome sequence of Yersinia pestis strains Antiqua and Nepal516: evidence of gene reduction in an emerging pathogen.</title>
        <authorList>
            <person name="Chain P.S.G."/>
            <person name="Hu P."/>
            <person name="Malfatti S.A."/>
            <person name="Radnedge L."/>
            <person name="Larimer F."/>
            <person name="Vergez L.M."/>
            <person name="Worsham P."/>
            <person name="Chu M.C."/>
            <person name="Andersen G.L."/>
        </authorList>
    </citation>
    <scope>NUCLEOTIDE SEQUENCE [LARGE SCALE GENOMIC DNA]</scope>
    <source>
        <strain>Antiqua</strain>
    </source>
</reference>
<feature type="chain" id="PRO_1000188158" description="Small ribosomal subunit biogenesis GTPase RsgA">
    <location>
        <begin position="1"/>
        <end position="350"/>
    </location>
</feature>
<feature type="domain" description="CP-type G" evidence="2">
    <location>
        <begin position="103"/>
        <end position="273"/>
    </location>
</feature>
<feature type="region of interest" description="Disordered" evidence="3">
    <location>
        <begin position="1"/>
        <end position="35"/>
    </location>
</feature>
<feature type="compositionally biased region" description="Polar residues" evidence="3">
    <location>
        <begin position="1"/>
        <end position="17"/>
    </location>
</feature>
<feature type="binding site" evidence="1">
    <location>
        <begin position="159"/>
        <end position="162"/>
    </location>
    <ligand>
        <name>GTP</name>
        <dbReference type="ChEBI" id="CHEBI:37565"/>
    </ligand>
</feature>
<feature type="binding site" evidence="1">
    <location>
        <begin position="213"/>
        <end position="221"/>
    </location>
    <ligand>
        <name>GTP</name>
        <dbReference type="ChEBI" id="CHEBI:37565"/>
    </ligand>
</feature>
<feature type="binding site" evidence="1">
    <location>
        <position position="297"/>
    </location>
    <ligand>
        <name>Zn(2+)</name>
        <dbReference type="ChEBI" id="CHEBI:29105"/>
    </ligand>
</feature>
<feature type="binding site" evidence="1">
    <location>
        <position position="302"/>
    </location>
    <ligand>
        <name>Zn(2+)</name>
        <dbReference type="ChEBI" id="CHEBI:29105"/>
    </ligand>
</feature>
<feature type="binding site" evidence="1">
    <location>
        <position position="304"/>
    </location>
    <ligand>
        <name>Zn(2+)</name>
        <dbReference type="ChEBI" id="CHEBI:29105"/>
    </ligand>
</feature>
<feature type="binding site" evidence="1">
    <location>
        <position position="310"/>
    </location>
    <ligand>
        <name>Zn(2+)</name>
        <dbReference type="ChEBI" id="CHEBI:29105"/>
    </ligand>
</feature>
<keyword id="KW-0963">Cytoplasm</keyword>
<keyword id="KW-0342">GTP-binding</keyword>
<keyword id="KW-0378">Hydrolase</keyword>
<keyword id="KW-0479">Metal-binding</keyword>
<keyword id="KW-0547">Nucleotide-binding</keyword>
<keyword id="KW-0690">Ribosome biogenesis</keyword>
<keyword id="KW-0694">RNA-binding</keyword>
<keyword id="KW-0699">rRNA-binding</keyword>
<keyword id="KW-0862">Zinc</keyword>
<gene>
    <name evidence="1" type="primary">rsgA</name>
    <name type="ordered locus">YPA_3919</name>
</gene>
<accession>Q1C0Z2</accession>
<comment type="function">
    <text evidence="1">One of several proteins that assist in the late maturation steps of the functional core of the 30S ribosomal subunit. Helps release RbfA from mature subunits. May play a role in the assembly of ribosomal proteins into the subunit. Circularly permuted GTPase that catalyzes slow GTP hydrolysis, GTPase activity is stimulated by the 30S ribosomal subunit.</text>
</comment>
<comment type="cofactor">
    <cofactor evidence="1">
        <name>Zn(2+)</name>
        <dbReference type="ChEBI" id="CHEBI:29105"/>
    </cofactor>
    <text evidence="1">Binds 1 zinc ion per subunit.</text>
</comment>
<comment type="subunit">
    <text evidence="1">Monomer. Associates with 30S ribosomal subunit, binds 16S rRNA.</text>
</comment>
<comment type="subcellular location">
    <subcellularLocation>
        <location evidence="1">Cytoplasm</location>
    </subcellularLocation>
</comment>
<comment type="similarity">
    <text evidence="1">Belongs to the TRAFAC class YlqF/YawG GTPase family. RsgA subfamily.</text>
</comment>
<proteinExistence type="inferred from homology"/>
<dbReference type="EC" id="3.6.1.-" evidence="1"/>
<dbReference type="EMBL" id="CP000308">
    <property type="protein sequence ID" value="ABG15880.1"/>
    <property type="molecule type" value="Genomic_DNA"/>
</dbReference>
<dbReference type="RefSeq" id="WP_002209142.1">
    <property type="nucleotide sequence ID" value="NZ_CP009906.1"/>
</dbReference>
<dbReference type="SMR" id="Q1C0Z2"/>
<dbReference type="GeneID" id="57974243"/>
<dbReference type="KEGG" id="ypa:YPA_3919"/>
<dbReference type="Proteomes" id="UP000001971">
    <property type="component" value="Chromosome"/>
</dbReference>
<dbReference type="GO" id="GO:0005737">
    <property type="term" value="C:cytoplasm"/>
    <property type="evidence" value="ECO:0007669"/>
    <property type="project" value="UniProtKB-SubCell"/>
</dbReference>
<dbReference type="GO" id="GO:0005525">
    <property type="term" value="F:GTP binding"/>
    <property type="evidence" value="ECO:0007669"/>
    <property type="project" value="UniProtKB-UniRule"/>
</dbReference>
<dbReference type="GO" id="GO:0003924">
    <property type="term" value="F:GTPase activity"/>
    <property type="evidence" value="ECO:0007669"/>
    <property type="project" value="UniProtKB-UniRule"/>
</dbReference>
<dbReference type="GO" id="GO:0046872">
    <property type="term" value="F:metal ion binding"/>
    <property type="evidence" value="ECO:0007669"/>
    <property type="project" value="UniProtKB-KW"/>
</dbReference>
<dbReference type="GO" id="GO:0019843">
    <property type="term" value="F:rRNA binding"/>
    <property type="evidence" value="ECO:0007669"/>
    <property type="project" value="UniProtKB-KW"/>
</dbReference>
<dbReference type="GO" id="GO:0042274">
    <property type="term" value="P:ribosomal small subunit biogenesis"/>
    <property type="evidence" value="ECO:0007669"/>
    <property type="project" value="UniProtKB-UniRule"/>
</dbReference>
<dbReference type="CDD" id="cd01854">
    <property type="entry name" value="YjeQ_EngC"/>
    <property type="match status" value="1"/>
</dbReference>
<dbReference type="Gene3D" id="2.40.50.140">
    <property type="entry name" value="Nucleic acid-binding proteins"/>
    <property type="match status" value="1"/>
</dbReference>
<dbReference type="Gene3D" id="3.40.50.300">
    <property type="entry name" value="P-loop containing nucleotide triphosphate hydrolases"/>
    <property type="match status" value="1"/>
</dbReference>
<dbReference type="Gene3D" id="1.10.40.50">
    <property type="entry name" value="Probable gtpase engc, domain 3"/>
    <property type="match status" value="1"/>
</dbReference>
<dbReference type="HAMAP" id="MF_01820">
    <property type="entry name" value="GTPase_RsgA"/>
    <property type="match status" value="1"/>
</dbReference>
<dbReference type="InterPro" id="IPR030378">
    <property type="entry name" value="G_CP_dom"/>
</dbReference>
<dbReference type="InterPro" id="IPR012340">
    <property type="entry name" value="NA-bd_OB-fold"/>
</dbReference>
<dbReference type="InterPro" id="IPR027417">
    <property type="entry name" value="P-loop_NTPase"/>
</dbReference>
<dbReference type="InterPro" id="IPR004881">
    <property type="entry name" value="Ribosome_biogen_GTPase_RsgA"/>
</dbReference>
<dbReference type="InterPro" id="IPR010914">
    <property type="entry name" value="RsgA_GTPase_dom"/>
</dbReference>
<dbReference type="NCBIfam" id="NF008931">
    <property type="entry name" value="PRK12288.1"/>
    <property type="match status" value="1"/>
</dbReference>
<dbReference type="NCBIfam" id="TIGR00157">
    <property type="entry name" value="ribosome small subunit-dependent GTPase A"/>
    <property type="match status" value="1"/>
</dbReference>
<dbReference type="PANTHER" id="PTHR32120">
    <property type="entry name" value="SMALL RIBOSOMAL SUBUNIT BIOGENESIS GTPASE RSGA"/>
    <property type="match status" value="1"/>
</dbReference>
<dbReference type="PANTHER" id="PTHR32120:SF11">
    <property type="entry name" value="SMALL RIBOSOMAL SUBUNIT BIOGENESIS GTPASE RSGA 1, MITOCHONDRIAL-RELATED"/>
    <property type="match status" value="1"/>
</dbReference>
<dbReference type="Pfam" id="PF03193">
    <property type="entry name" value="RsgA_GTPase"/>
    <property type="match status" value="1"/>
</dbReference>
<dbReference type="SUPFAM" id="SSF52540">
    <property type="entry name" value="P-loop containing nucleoside triphosphate hydrolases"/>
    <property type="match status" value="1"/>
</dbReference>
<dbReference type="PROSITE" id="PS50936">
    <property type="entry name" value="ENGC_GTPASE"/>
    <property type="match status" value="1"/>
</dbReference>
<dbReference type="PROSITE" id="PS51721">
    <property type="entry name" value="G_CP"/>
    <property type="match status" value="1"/>
</dbReference>